<reference key="1">
    <citation type="journal article" date="2014" name="Plant Cell">
        <title>Structural studies of cinnamoyl-CoA reductase and cinnamyl-alcohol dehydrogenase, key enzymes of monolignol biosynthesis.</title>
        <authorList>
            <person name="Pan H."/>
            <person name="Zhou R."/>
            <person name="Louie G.V."/>
            <person name="Muhlemann J.K."/>
            <person name="Bomati E.K."/>
            <person name="Bowman M.E."/>
            <person name="Dudareva N."/>
            <person name="Dixon R.A."/>
            <person name="Noel J.P."/>
            <person name="Wang X."/>
        </authorList>
    </citation>
    <scope>NUCLEOTIDE SEQUENCE [MRNA]</scope>
    <scope>X-RAY CRYSTALLOGRAPHY (1.60 ANGSTROMS) IN COMPLEX WITH NADP</scope>
    <scope>FUNCTION</scope>
    <scope>MUTAGENESIS OF CYS-150 AND CYS-158</scope>
    <scope>DISULFIDE BONDS</scope>
    <scope>BIOPHYSICOCHEMICAL PROPERTIES</scope>
    <scope>CATALYTIC ACTIVITY</scope>
    <scope>ACTIVITY REGULATION</scope>
    <scope>PATHWAY</scope>
</reference>
<reference key="2">
    <citation type="journal article" date="2014" name="New Phytol.">
        <title>The monolignol pathway contributes to the biosynthesis of volatile phenylpropenes in flowers.</title>
        <authorList>
            <person name="Muhlemann J.K."/>
            <person name="Woodworth B.D."/>
            <person name="Morgan J.A."/>
            <person name="Dudareva N."/>
        </authorList>
    </citation>
    <scope>FUNCTION</scope>
    <scope>DISRUPTION PHENOTYPE</scope>
    <scope>CATALYTIC ACTIVITY</scope>
    <scope>TISSUE SPECIFICITY</scope>
    <scope>DEVELOPMENTAL STAGE</scope>
    <scope>SUBCELLULAR LOCATION</scope>
    <scope>INDUCTION</scope>
    <scope>PATHWAY</scope>
    <source>
        <strain>cv. Mitchell</strain>
    </source>
</reference>
<proteinExistence type="evidence at protein level"/>
<feature type="chain" id="PRO_0000451497" description="Cinnamoyl-CoA reductase 1">
    <location>
        <begin position="1"/>
        <end position="333"/>
    </location>
</feature>
<feature type="active site" description="Proton donor" evidence="1">
    <location>
        <position position="161"/>
    </location>
</feature>
<feature type="binding site" evidence="4 9">
    <location>
        <begin position="13"/>
        <end position="19"/>
    </location>
    <ligand>
        <name>NADP(+)</name>
        <dbReference type="ChEBI" id="CHEBI:58349"/>
    </ligand>
</feature>
<feature type="binding site" evidence="4 9">
    <location>
        <position position="38"/>
    </location>
    <ligand>
        <name>NADP(+)</name>
        <dbReference type="ChEBI" id="CHEBI:58349"/>
    </ligand>
</feature>
<feature type="binding site" evidence="4 9">
    <location>
        <position position="44"/>
    </location>
    <ligand>
        <name>NADP(+)</name>
        <dbReference type="ChEBI" id="CHEBI:58349"/>
    </ligand>
</feature>
<feature type="binding site" evidence="4 9">
    <location>
        <begin position="64"/>
        <end position="65"/>
    </location>
    <ligand>
        <name>NADP(+)</name>
        <dbReference type="ChEBI" id="CHEBI:58349"/>
    </ligand>
</feature>
<feature type="binding site" evidence="4 9">
    <location>
        <begin position="84"/>
        <end position="86"/>
    </location>
    <ligand>
        <name>NADP(+)</name>
        <dbReference type="ChEBI" id="CHEBI:58349"/>
    </ligand>
</feature>
<feature type="binding site" evidence="4 9">
    <location>
        <position position="157"/>
    </location>
    <ligand>
        <name>NADP(+)</name>
        <dbReference type="ChEBI" id="CHEBI:58349"/>
    </ligand>
</feature>
<feature type="binding site" evidence="4 9">
    <location>
        <position position="161"/>
    </location>
    <ligand>
        <name>NADP(+)</name>
        <dbReference type="ChEBI" id="CHEBI:58349"/>
    </ligand>
</feature>
<feature type="binding site" evidence="4 9">
    <location>
        <begin position="184"/>
        <end position="187"/>
    </location>
    <ligand>
        <name>NADP(+)</name>
        <dbReference type="ChEBI" id="CHEBI:58349"/>
    </ligand>
</feature>
<feature type="binding site" evidence="4 9">
    <location>
        <position position="199"/>
    </location>
    <ligand>
        <name>NADP(+)</name>
        <dbReference type="ChEBI" id="CHEBI:58349"/>
    </ligand>
</feature>
<feature type="disulfide bond" evidence="4 10">
    <location>
        <begin position="150"/>
        <end position="158"/>
    </location>
</feature>
<feature type="mutagenesis site" description="Increased activity." evidence="4">
    <original>C</original>
    <variation>A</variation>
    <variation>S</variation>
    <location>
        <position position="150"/>
    </location>
</feature>
<feature type="mutagenesis site" description="Increased activity." evidence="4">
    <original>C</original>
    <variation>A</variation>
    <location>
        <position position="158"/>
    </location>
</feature>
<feature type="mutagenesis site" description="Reduced activity." evidence="4">
    <original>C</original>
    <variation>S</variation>
    <location>
        <position position="158"/>
    </location>
</feature>
<feature type="turn" evidence="12">
    <location>
        <begin position="3"/>
        <end position="6"/>
    </location>
</feature>
<feature type="strand" evidence="11">
    <location>
        <begin position="8"/>
        <end position="12"/>
    </location>
</feature>
<feature type="turn" evidence="11">
    <location>
        <begin position="13"/>
        <end position="15"/>
    </location>
</feature>
<feature type="helix" evidence="11">
    <location>
        <begin position="17"/>
        <end position="28"/>
    </location>
</feature>
<feature type="strand" evidence="11">
    <location>
        <begin position="32"/>
        <end position="38"/>
    </location>
</feature>
<feature type="helix" evidence="11">
    <location>
        <begin position="43"/>
        <end position="45"/>
    </location>
</feature>
<feature type="helix" evidence="11">
    <location>
        <begin position="46"/>
        <end position="49"/>
    </location>
</feature>
<feature type="helix" evidence="11">
    <location>
        <begin position="54"/>
        <end position="57"/>
    </location>
</feature>
<feature type="strand" evidence="11">
    <location>
        <begin position="58"/>
        <end position="62"/>
    </location>
</feature>
<feature type="helix" evidence="11">
    <location>
        <begin position="68"/>
        <end position="75"/>
    </location>
</feature>
<feature type="strand" evidence="11">
    <location>
        <begin position="79"/>
        <end position="83"/>
    </location>
</feature>
<feature type="helix" evidence="11">
    <location>
        <begin position="92"/>
        <end position="112"/>
    </location>
</feature>
<feature type="strand" evidence="11">
    <location>
        <begin position="116"/>
        <end position="121"/>
    </location>
</feature>
<feature type="helix" evidence="11">
    <location>
        <begin position="124"/>
        <end position="126"/>
    </location>
</feature>
<feature type="strand" evidence="11">
    <location>
        <begin position="131"/>
        <end position="133"/>
    </location>
</feature>
<feature type="helix" evidence="11">
    <location>
        <begin position="147"/>
        <end position="152"/>
    </location>
</feature>
<feature type="helix" evidence="11">
    <location>
        <begin position="156"/>
        <end position="175"/>
    </location>
</feature>
<feature type="strand" evidence="11">
    <location>
        <begin position="179"/>
        <end position="184"/>
    </location>
</feature>
<feature type="strand" evidence="11">
    <location>
        <begin position="186"/>
        <end position="189"/>
    </location>
</feature>
<feature type="strand" evidence="11">
    <location>
        <begin position="192"/>
        <end position="195"/>
    </location>
</feature>
<feature type="helix" evidence="11">
    <location>
        <begin position="198"/>
        <end position="207"/>
    </location>
</feature>
<feature type="strand" evidence="12">
    <location>
        <begin position="212"/>
        <end position="214"/>
    </location>
</feature>
<feature type="strand" evidence="11">
    <location>
        <begin position="218"/>
        <end position="223"/>
    </location>
</feature>
<feature type="helix" evidence="11">
    <location>
        <begin position="224"/>
        <end position="236"/>
    </location>
</feature>
<feature type="strand" evidence="11">
    <location>
        <begin position="242"/>
        <end position="246"/>
    </location>
</feature>
<feature type="strand" evidence="11">
    <location>
        <begin position="249"/>
        <end position="252"/>
    </location>
</feature>
<feature type="helix" evidence="11">
    <location>
        <begin position="253"/>
        <end position="263"/>
    </location>
</feature>
<feature type="strand" evidence="11">
    <location>
        <begin position="272"/>
        <end position="274"/>
    </location>
</feature>
<feature type="helix" evidence="11">
    <location>
        <begin position="289"/>
        <end position="293"/>
    </location>
</feature>
<feature type="helix" evidence="11">
    <location>
        <begin position="301"/>
        <end position="314"/>
    </location>
</feature>
<organism>
    <name type="scientific">Petunia hybrida</name>
    <name type="common">Petunia</name>
    <dbReference type="NCBI Taxonomy" id="4102"/>
    <lineage>
        <taxon>Eukaryota</taxon>
        <taxon>Viridiplantae</taxon>
        <taxon>Streptophyta</taxon>
        <taxon>Embryophyta</taxon>
        <taxon>Tracheophyta</taxon>
        <taxon>Spermatophyta</taxon>
        <taxon>Magnoliopsida</taxon>
        <taxon>eudicotyledons</taxon>
        <taxon>Gunneridae</taxon>
        <taxon>Pentapetalae</taxon>
        <taxon>asterids</taxon>
        <taxon>lamiids</taxon>
        <taxon>Solanales</taxon>
        <taxon>Solanaceae</taxon>
        <taxon>Petunioideae</taxon>
        <taxon>Petunia</taxon>
    </lineage>
</organism>
<gene>
    <name evidence="5 6" type="primary">CCR1</name>
</gene>
<dbReference type="EC" id="1.2.1.44" evidence="3 4"/>
<dbReference type="EMBL" id="KF040494">
    <property type="protein sequence ID" value="AHX56186.1"/>
    <property type="molecule type" value="mRNA"/>
</dbReference>
<dbReference type="PDB" id="4R1S">
    <property type="method" value="X-ray"/>
    <property type="resolution" value="1.60 A"/>
    <property type="chains" value="A/B=1-333"/>
</dbReference>
<dbReference type="PDB" id="4R1T">
    <property type="method" value="X-ray"/>
    <property type="resolution" value="1.70 A"/>
    <property type="chains" value="A=1-333"/>
</dbReference>
<dbReference type="PDBsum" id="4R1S"/>
<dbReference type="PDBsum" id="4R1T"/>
<dbReference type="SMR" id="A0A059TC02"/>
<dbReference type="BRENDA" id="1.2.1.44">
    <property type="organism ID" value="4700"/>
</dbReference>
<dbReference type="UniPathway" id="UPA00711"/>
<dbReference type="EvolutionaryTrace" id="A0A059TC02"/>
<dbReference type="GO" id="GO:0005737">
    <property type="term" value="C:cytoplasm"/>
    <property type="evidence" value="ECO:0000314"/>
    <property type="project" value="UniProtKB"/>
</dbReference>
<dbReference type="GO" id="GO:0016621">
    <property type="term" value="F:cinnamoyl-CoA reductase activity"/>
    <property type="evidence" value="ECO:0000314"/>
    <property type="project" value="UniProtKB"/>
</dbReference>
<dbReference type="GO" id="GO:0000166">
    <property type="term" value="F:nucleotide binding"/>
    <property type="evidence" value="ECO:0007669"/>
    <property type="project" value="UniProtKB-KW"/>
</dbReference>
<dbReference type="GO" id="GO:0016616">
    <property type="term" value="F:oxidoreductase activity, acting on the CH-OH group of donors, NAD or NADP as acceptor"/>
    <property type="evidence" value="ECO:0007669"/>
    <property type="project" value="TreeGrafter"/>
</dbReference>
<dbReference type="GO" id="GO:0007623">
    <property type="term" value="P:circadian rhythm"/>
    <property type="evidence" value="ECO:0000270"/>
    <property type="project" value="UniProtKB"/>
</dbReference>
<dbReference type="GO" id="GO:0010597">
    <property type="term" value="P:green leaf volatile biosynthetic process"/>
    <property type="evidence" value="ECO:0000315"/>
    <property type="project" value="UniProtKB"/>
</dbReference>
<dbReference type="GO" id="GO:0009809">
    <property type="term" value="P:lignin biosynthetic process"/>
    <property type="evidence" value="ECO:0000315"/>
    <property type="project" value="UniProtKB"/>
</dbReference>
<dbReference type="GO" id="GO:0009699">
    <property type="term" value="P:phenylpropanoid biosynthetic process"/>
    <property type="evidence" value="ECO:0000314"/>
    <property type="project" value="UniProtKB"/>
</dbReference>
<dbReference type="CDD" id="cd08958">
    <property type="entry name" value="FR_SDR_e"/>
    <property type="match status" value="1"/>
</dbReference>
<dbReference type="FunFam" id="3.40.50.720:FF:000199">
    <property type="entry name" value="Cinnamoyl-CoA reductase 1"/>
    <property type="match status" value="1"/>
</dbReference>
<dbReference type="Gene3D" id="3.40.50.720">
    <property type="entry name" value="NAD(P)-binding Rossmann-like Domain"/>
    <property type="match status" value="1"/>
</dbReference>
<dbReference type="InterPro" id="IPR001509">
    <property type="entry name" value="Epimerase_deHydtase"/>
</dbReference>
<dbReference type="InterPro" id="IPR036291">
    <property type="entry name" value="NAD(P)-bd_dom_sf"/>
</dbReference>
<dbReference type="InterPro" id="IPR050425">
    <property type="entry name" value="NAD(P)_dehydrat-like"/>
</dbReference>
<dbReference type="PANTHER" id="PTHR10366:SF404">
    <property type="entry name" value="CINNAMOYL-COA REDUCTASE 1"/>
    <property type="match status" value="1"/>
</dbReference>
<dbReference type="PANTHER" id="PTHR10366">
    <property type="entry name" value="NAD DEPENDENT EPIMERASE/DEHYDRATASE"/>
    <property type="match status" value="1"/>
</dbReference>
<dbReference type="Pfam" id="PF01370">
    <property type="entry name" value="Epimerase"/>
    <property type="match status" value="1"/>
</dbReference>
<dbReference type="SUPFAM" id="SSF51735">
    <property type="entry name" value="NAD(P)-binding Rossmann-fold domains"/>
    <property type="match status" value="1"/>
</dbReference>
<protein>
    <recommendedName>
        <fullName evidence="5 6">Cinnamoyl-CoA reductase 1</fullName>
        <shortName evidence="5 6">Ph-CCR1</shortName>
        <ecNumber evidence="3 4">1.2.1.44</ecNumber>
    </recommendedName>
    <alternativeName>
        <fullName evidence="7">Coniferylaldehyde synthase</fullName>
    </alternativeName>
    <alternativeName>
        <fullName evidence="8">Coumaroyl-CoA reductase</fullName>
    </alternativeName>
    <alternativeName>
        <fullName evidence="8">Feruloyl-CoA reductase</fullName>
    </alternativeName>
    <alternativeName>
        <fullName evidence="8">Sinapoyl-CoA reductase</fullName>
    </alternativeName>
</protein>
<keyword id="KW-0002">3D-structure</keyword>
<keyword id="KW-0963">Cytoplasm</keyword>
<keyword id="KW-1015">Disulfide bond</keyword>
<keyword id="KW-0438">Lignin biosynthesis</keyword>
<keyword id="KW-0521">NADP</keyword>
<keyword id="KW-0547">Nucleotide-binding</keyword>
<keyword id="KW-0560">Oxidoreductase</keyword>
<keyword id="KW-0587">Phenylpropanoid metabolism</keyword>
<evidence type="ECO:0000250" key="1">
    <source>
        <dbReference type="UniProtKB" id="Q12068"/>
    </source>
</evidence>
<evidence type="ECO:0000250" key="2">
    <source>
        <dbReference type="UniProtKB" id="Q9S9N9"/>
    </source>
</evidence>
<evidence type="ECO:0000269" key="3">
    <source>
    </source>
</evidence>
<evidence type="ECO:0000269" key="4">
    <source>
    </source>
</evidence>
<evidence type="ECO:0000303" key="5">
    <source>
    </source>
</evidence>
<evidence type="ECO:0000303" key="6">
    <source>
    </source>
</evidence>
<evidence type="ECO:0000305" key="7"/>
<evidence type="ECO:0000305" key="8">
    <source>
    </source>
</evidence>
<evidence type="ECO:0007744" key="9">
    <source>
        <dbReference type="PDB" id="4R1S"/>
    </source>
</evidence>
<evidence type="ECO:0007744" key="10">
    <source>
        <dbReference type="PDB" id="4R1T"/>
    </source>
</evidence>
<evidence type="ECO:0007829" key="11">
    <source>
        <dbReference type="PDB" id="4R1S"/>
    </source>
</evidence>
<evidence type="ECO:0007829" key="12">
    <source>
        <dbReference type="PDB" id="4R1T"/>
    </source>
</evidence>
<sequence length="333" mass="36886">MRSVSGQVVCVTGAGGFIASWLVKILLEKGYTVRGTVRNPDDPKNGHLRELEGAKERLTLCKADLLDYQSLREAINGCDGVFHTASPVTDDPEQMVEPAVIGTKNVINAAAEANVRRVVFTSSIGAVYMDPNRDPETVVDETCWSDPDFCKNTKNWYCYGKMVAEQAAWEEAKEKGVDLVVINPVLVQGPLLQTTVNASVLHILKYLTGSAKTYANSVQAYVDVKDVALAHILLYETPEASGRYLCAESVLHRGDVVEILSKFFPEYPIPTKCSDVTKPRVKPYKFSNQKLKDLGLEFTPVKQCLYETVKSLQEKGHLPIPTQKDEPIIRIQP</sequence>
<comment type="function">
    <text evidence="3 4">Involved in the latter stages of lignin biosynthesis (PubMed:24985707). Catalyzes one of the last steps of monolignol biosynthesis, the conversion of cinnamoyl-CoAs into their corresponding cinnamaldehydes (PubMed:24985707, PubMed:25217505). Mediates the conversion of feruloyl CoA to coniferylaldehyde (PubMed:24985707, PubMed:25217505). Also active toward p-coumaroyl-CoA and sinapoyl-CoA (PubMed:24985707, PubMed:25217505). Involved in the production of floral volatile phenylpropanoids in flowers of fragrant cultivars (e.g. cv. Mitchell and cv. V26) from cinnamic acid, a common precursor with the anthocyanin biosynthesis pathway involved in flower pigmentation (PubMed:24985707).</text>
</comment>
<comment type="catalytic activity">
    <reaction evidence="3 4">
        <text>(E)-coniferaldehyde + NADP(+) + CoA = (E)-feruloyl-CoA + NADPH + H(+)</text>
        <dbReference type="Rhea" id="RHEA:64648"/>
        <dbReference type="ChEBI" id="CHEBI:15378"/>
        <dbReference type="ChEBI" id="CHEBI:16547"/>
        <dbReference type="ChEBI" id="CHEBI:57287"/>
        <dbReference type="ChEBI" id="CHEBI:57783"/>
        <dbReference type="ChEBI" id="CHEBI:58349"/>
        <dbReference type="ChEBI" id="CHEBI:87305"/>
        <dbReference type="EC" id="1.2.1.44"/>
    </reaction>
    <physiologicalReaction direction="right-to-left" evidence="3 4">
        <dbReference type="Rhea" id="RHEA:64650"/>
    </physiologicalReaction>
</comment>
<comment type="catalytic activity">
    <reaction evidence="3 4">
        <text>(E)-4-coumaraldehyde + NADP(+) + CoA = (E)-4-coumaroyl-CoA + NADPH + H(+)</text>
        <dbReference type="Rhea" id="RHEA:64652"/>
        <dbReference type="ChEBI" id="CHEBI:15378"/>
        <dbReference type="ChEBI" id="CHEBI:28353"/>
        <dbReference type="ChEBI" id="CHEBI:57287"/>
        <dbReference type="ChEBI" id="CHEBI:57783"/>
        <dbReference type="ChEBI" id="CHEBI:58349"/>
        <dbReference type="ChEBI" id="CHEBI:85008"/>
        <dbReference type="EC" id="1.2.1.44"/>
    </reaction>
    <physiologicalReaction direction="right-to-left" evidence="3 4">
        <dbReference type="Rhea" id="RHEA:64654"/>
    </physiologicalReaction>
</comment>
<comment type="catalytic activity">
    <reaction evidence="3 4">
        <text>(E)-sinapaldehyde + NADP(+) + CoA = (E)-sinapoyl-CoA + NADPH + H(+)</text>
        <dbReference type="Rhea" id="RHEA:64656"/>
        <dbReference type="ChEBI" id="CHEBI:15378"/>
        <dbReference type="ChEBI" id="CHEBI:27949"/>
        <dbReference type="ChEBI" id="CHEBI:57287"/>
        <dbReference type="ChEBI" id="CHEBI:57393"/>
        <dbReference type="ChEBI" id="CHEBI:57783"/>
        <dbReference type="ChEBI" id="CHEBI:58349"/>
        <dbReference type="EC" id="1.2.1.44"/>
    </reaction>
    <physiologicalReaction direction="right-to-left" evidence="3 4">
        <dbReference type="Rhea" id="RHEA:64658"/>
    </physiologicalReaction>
</comment>
<comment type="catalytic activity">
    <reaction evidence="2">
        <text>(E)-cinnamaldehyde + NADP(+) + CoA = (E)-cinnamoyl-CoA + NADPH + H(+)</text>
        <dbReference type="Rhea" id="RHEA:10620"/>
        <dbReference type="ChEBI" id="CHEBI:15378"/>
        <dbReference type="ChEBI" id="CHEBI:16731"/>
        <dbReference type="ChEBI" id="CHEBI:57252"/>
        <dbReference type="ChEBI" id="CHEBI:57287"/>
        <dbReference type="ChEBI" id="CHEBI:57783"/>
        <dbReference type="ChEBI" id="CHEBI:58349"/>
        <dbReference type="EC" id="1.2.1.44"/>
    </reaction>
    <physiologicalReaction direction="right-to-left" evidence="2">
        <dbReference type="Rhea" id="RHEA:10622"/>
    </physiologicalReaction>
</comment>
<comment type="activity regulation">
    <text evidence="4">Inhibited by sodium iodide-mediated oxidation.</text>
</comment>
<comment type="biophysicochemical properties">
    <kinetics>
        <KM evidence="4">208.6 uM for p-coumaroyl-CoA</KM>
        <KM evidence="4">307.6 uM for feruloyl-CoA</KM>
        <KM evidence="4">270.3 uM for sinapoyl-CoA</KM>
        <Vmax evidence="4">1235.7 nmol/sec/mg enzyme with p-coumaroyl-CoA as substrate</Vmax>
        <Vmax evidence="4">5713.0 nmol/sec/mg enzyme with feruloyl-CoA as substrate</Vmax>
        <Vmax evidence="4">3384.7 nmol/sec/mg enzyme with sinapoyl-CoA as substrate</Vmax>
        <text evidence="4">kcat is 1.2 sec(-1) with p-coumaroyl-CoA as substrate (PubMed:25217505). kcat is 5.8 sec(-1) with feruloyl-CoA as substrate (PubMed:25217505). kcat is 3.4 sec(-1) with sinapoyl-CoA as substrate (PubMed:25217505).</text>
    </kinetics>
    <phDependence>
        <text evidence="4">Optimum pH is 6.</text>
    </phDependence>
</comment>
<comment type="pathway">
    <text evidence="3 4">Aromatic compound metabolism; phenylpropanoid biosynthesis.</text>
</comment>
<comment type="subcellular location">
    <subcellularLocation>
        <location evidence="3">Cytoplasm</location>
    </subcellularLocation>
</comment>
<comment type="tissue specificity">
    <text evidence="3">Expressed in flowers, leaves and stems.</text>
</comment>
<comment type="developmental stage">
    <text evidence="3">Highly expressed in the scent-producing corollas and tubes of two days old flowers, reaching a maximum at day three post-anthesis, and, to a lower extent, in other floral tissues (e.g. ovary, pistil, sepals and stamen).</text>
</comment>
<comment type="induction">
    <text evidence="3">Circadian-regulation with peak levels occurring in flowers during the light period, in the afternoon.</text>
</comment>
<comment type="PTM">
    <text evidence="4">The formation of a reversible disulfide bond reduces activity by perturbing the positioning of nearby catalytic residues.</text>
</comment>
<comment type="disruption phenotype">
    <text evidence="3">No visible effect on the emission and internal pools of phenylpropene and benzenoid compounds, but increased accumulation of feruloyl-CoA, p-coumaroyl-CoA and vanillin (PubMed:24985707). Reduced lignin content (PubMed:24985707).</text>
</comment>
<comment type="similarity">
    <text evidence="7">Belongs to the NAD(P)-dependent epimerase/dehydratase family. Dihydroflavonol-4-reductase subfamily.</text>
</comment>
<accession>A0A059TC02</accession>
<name>CCR1_PETHY</name>